<keyword id="KW-0903">Direct protein sequencing</keyword>
<keyword id="KW-0225">Disease variant</keyword>
<keyword id="KW-0456">Lyase</keyword>
<keyword id="KW-0479">Metal-binding</keyword>
<keyword id="KW-0496">Mitochondrion</keyword>
<keyword id="KW-1267">Proteomics identification</keyword>
<keyword id="KW-1185">Reference proteome</keyword>
<keyword id="KW-0809">Transit peptide</keyword>
<keyword id="KW-0862">Zinc</keyword>
<protein>
    <recommendedName>
        <fullName evidence="14">Carbonic anhydrase 5A, mitochondrial</fullName>
        <ecNumber evidence="10 11">4.2.1.1</ecNumber>
    </recommendedName>
    <alternativeName>
        <fullName>Carbonate dehydratase VA</fullName>
    </alternativeName>
    <alternativeName>
        <fullName>Carbonic anhydrase VA</fullName>
        <shortName>CA-VA</shortName>
    </alternativeName>
</protein>
<accession>P35218</accession>
<accession>B2RPF2</accession>
<organism>
    <name type="scientific">Homo sapiens</name>
    <name type="common">Human</name>
    <dbReference type="NCBI Taxonomy" id="9606"/>
    <lineage>
        <taxon>Eukaryota</taxon>
        <taxon>Metazoa</taxon>
        <taxon>Chordata</taxon>
        <taxon>Craniata</taxon>
        <taxon>Vertebrata</taxon>
        <taxon>Euteleostomi</taxon>
        <taxon>Mammalia</taxon>
        <taxon>Eutheria</taxon>
        <taxon>Euarchontoglires</taxon>
        <taxon>Primates</taxon>
        <taxon>Haplorrhini</taxon>
        <taxon>Catarrhini</taxon>
        <taxon>Hominidae</taxon>
        <taxon>Homo</taxon>
    </lineage>
</organism>
<sequence>MLGRNTWKTSAFSFLVEQMWAPLWSRSMRPGRWCSQRSCAWQTSNNTLHPLWTVPVSVPGGTRQSPINIQWRDSVYDPQLKPLRVSYEAASCLYIWNTGYLFQVEFDDATEASGISGGPLENHYRLKQFHFHWGAVNEGGSEHTVDGHAYPAELHLVHWNSVKYQNYKEAVVGENGLAVIGVFLKLGAHHQTLQRLVDILPEIKHKDARAAMRPFDPSTLLPTCWDYWTYAGSLTTPPLTESVTWIIQKEPVEVAPSQLSAFRTLLFSALGEEEKMMVNNYRPLQPLMNRKVWASFQATNEGTRS</sequence>
<gene>
    <name evidence="15" type="primary">CA5A</name>
    <name type="synonym">CA5</name>
</gene>
<dbReference type="EC" id="4.2.1.1" evidence="10 11"/>
<dbReference type="EMBL" id="L19297">
    <property type="protein sequence ID" value="AAA02890.1"/>
    <property type="molecule type" value="mRNA"/>
</dbReference>
<dbReference type="EMBL" id="U25134">
    <property type="protein sequence ID" value="AAC99806.1"/>
    <property type="molecule type" value="Genomic_DNA"/>
</dbReference>
<dbReference type="EMBL" id="S80181">
    <property type="protein sequence ID" value="AAB47048.1"/>
    <property type="molecule type" value="Genomic_DNA"/>
</dbReference>
<dbReference type="EMBL" id="S80175">
    <property type="protein sequence ID" value="AAB47048.1"/>
    <property type="status" value="JOINED"/>
    <property type="molecule type" value="Genomic_DNA"/>
</dbReference>
<dbReference type="EMBL" id="S80176">
    <property type="protein sequence ID" value="AAB47048.1"/>
    <property type="status" value="JOINED"/>
    <property type="molecule type" value="Genomic_DNA"/>
</dbReference>
<dbReference type="EMBL" id="S80177">
    <property type="protein sequence ID" value="AAB47048.1"/>
    <property type="status" value="JOINED"/>
    <property type="molecule type" value="Genomic_DNA"/>
</dbReference>
<dbReference type="EMBL" id="S80178">
    <property type="protein sequence ID" value="AAB47048.1"/>
    <property type="status" value="JOINED"/>
    <property type="molecule type" value="Genomic_DNA"/>
</dbReference>
<dbReference type="EMBL" id="S80240">
    <property type="protein sequence ID" value="AAB47048.1"/>
    <property type="status" value="JOINED"/>
    <property type="molecule type" value="Genomic_DNA"/>
</dbReference>
<dbReference type="EMBL" id="S80180">
    <property type="protein sequence ID" value="AAB47048.1"/>
    <property type="status" value="JOINED"/>
    <property type="molecule type" value="Genomic_DNA"/>
</dbReference>
<dbReference type="EMBL" id="CH471114">
    <property type="protein sequence ID" value="EAW95372.1"/>
    <property type="molecule type" value="Genomic_DNA"/>
</dbReference>
<dbReference type="EMBL" id="BC137405">
    <property type="protein sequence ID" value="AAI37406.1"/>
    <property type="molecule type" value="mRNA"/>
</dbReference>
<dbReference type="EMBL" id="BC137411">
    <property type="protein sequence ID" value="AAI37412.1"/>
    <property type="molecule type" value="mRNA"/>
</dbReference>
<dbReference type="CCDS" id="CCDS10965.1"/>
<dbReference type="PIR" id="A47745">
    <property type="entry name" value="CRHU5"/>
</dbReference>
<dbReference type="RefSeq" id="NP_001730.1">
    <property type="nucleotide sequence ID" value="NM_001739.2"/>
</dbReference>
<dbReference type="SMR" id="P35218"/>
<dbReference type="BioGRID" id="107218">
    <property type="interactions" value="51"/>
</dbReference>
<dbReference type="FunCoup" id="P35218">
    <property type="interactions" value="520"/>
</dbReference>
<dbReference type="IntAct" id="P35218">
    <property type="interactions" value="3"/>
</dbReference>
<dbReference type="STRING" id="9606.ENSP00000498065"/>
<dbReference type="BindingDB" id="P35218"/>
<dbReference type="ChEMBL" id="CHEMBL4789"/>
<dbReference type="DrugBank" id="DB03385">
    <property type="generic name" value="4-Methylimidazole"/>
</dbReference>
<dbReference type="DrugBank" id="DB00562">
    <property type="generic name" value="Benzthiazide"/>
</dbReference>
<dbReference type="DrugBank" id="DB01194">
    <property type="generic name" value="Brinzolamide"/>
</dbReference>
<dbReference type="DrugBank" id="DB00606">
    <property type="generic name" value="Cyclothiazide"/>
</dbReference>
<dbReference type="DrugBank" id="DB08846">
    <property type="generic name" value="Ellagic acid"/>
</dbReference>
<dbReference type="DrugBank" id="DB00909">
    <property type="generic name" value="Zonisamide"/>
</dbReference>
<dbReference type="DrugCentral" id="P35218"/>
<dbReference type="iPTMnet" id="P35218"/>
<dbReference type="PhosphoSitePlus" id="P35218"/>
<dbReference type="BioMuta" id="CA5A"/>
<dbReference type="DMDM" id="461680"/>
<dbReference type="MassIVE" id="P35218"/>
<dbReference type="PaxDb" id="9606-ENSP00000309649"/>
<dbReference type="PeptideAtlas" id="P35218"/>
<dbReference type="ProteomicsDB" id="54984"/>
<dbReference type="Antibodypedia" id="55888">
    <property type="antibodies" value="148 antibodies from 25 providers"/>
</dbReference>
<dbReference type="DNASU" id="763"/>
<dbReference type="Ensembl" id="ENST00000649794.3">
    <property type="protein sequence ID" value="ENSP00000498065.2"/>
    <property type="gene ID" value="ENSG00000174990.8"/>
</dbReference>
<dbReference type="GeneID" id="763"/>
<dbReference type="KEGG" id="hsa:763"/>
<dbReference type="MANE-Select" id="ENST00000649794.3">
    <property type="protein sequence ID" value="ENSP00000498065.2"/>
    <property type="RefSeq nucleotide sequence ID" value="NM_001739.2"/>
    <property type="RefSeq protein sequence ID" value="NP_001730.1"/>
</dbReference>
<dbReference type="UCSC" id="uc002fkn.2">
    <property type="organism name" value="human"/>
</dbReference>
<dbReference type="AGR" id="HGNC:1377"/>
<dbReference type="CTD" id="763"/>
<dbReference type="DisGeNET" id="763"/>
<dbReference type="GeneCards" id="CA5A"/>
<dbReference type="GeneReviews" id="CA5A"/>
<dbReference type="HGNC" id="HGNC:1377">
    <property type="gene designation" value="CA5A"/>
</dbReference>
<dbReference type="HPA" id="ENSG00000174990">
    <property type="expression patterns" value="Tissue enriched (liver)"/>
</dbReference>
<dbReference type="MalaCards" id="CA5A"/>
<dbReference type="MIM" id="114761">
    <property type="type" value="gene"/>
</dbReference>
<dbReference type="MIM" id="615751">
    <property type="type" value="phenotype"/>
</dbReference>
<dbReference type="neXtProt" id="NX_P35218"/>
<dbReference type="OpenTargets" id="ENSG00000174990"/>
<dbReference type="Orphanet" id="401948">
    <property type="disease" value="Hyperammonemic encephalopathy due to carbonic anhydrase VA deficiency"/>
</dbReference>
<dbReference type="PharmGKB" id="PA25992"/>
<dbReference type="VEuPathDB" id="HostDB:ENSG00000174990"/>
<dbReference type="eggNOG" id="KOG0382">
    <property type="taxonomic scope" value="Eukaryota"/>
</dbReference>
<dbReference type="GeneTree" id="ENSGT00940000162066"/>
<dbReference type="HOGENOM" id="CLU_039326_2_1_1"/>
<dbReference type="InParanoid" id="P35218"/>
<dbReference type="OMA" id="EKAMVNN"/>
<dbReference type="OrthoDB" id="429145at2759"/>
<dbReference type="PAN-GO" id="P35218">
    <property type="GO annotations" value="4 GO annotations based on evolutionary models"/>
</dbReference>
<dbReference type="PhylomeDB" id="P35218"/>
<dbReference type="TreeFam" id="TF316425"/>
<dbReference type="BRENDA" id="4.2.1.1">
    <property type="organism ID" value="2681"/>
</dbReference>
<dbReference type="PathwayCommons" id="P35218"/>
<dbReference type="Reactome" id="R-HSA-1475029">
    <property type="pathway name" value="Reversible hydration of carbon dioxide"/>
</dbReference>
<dbReference type="SABIO-RK" id="P35218"/>
<dbReference type="SignaLink" id="P35218"/>
<dbReference type="BioGRID-ORCS" id="763">
    <property type="hits" value="103 hits in 1119 CRISPR screens"/>
</dbReference>
<dbReference type="ChiTaRS" id="CA5A">
    <property type="organism name" value="human"/>
</dbReference>
<dbReference type="GenomeRNAi" id="763"/>
<dbReference type="Pharos" id="P35218">
    <property type="development level" value="Tclin"/>
</dbReference>
<dbReference type="PRO" id="PR:P35218"/>
<dbReference type="Proteomes" id="UP000005640">
    <property type="component" value="Chromosome 16"/>
</dbReference>
<dbReference type="RNAct" id="P35218">
    <property type="molecule type" value="protein"/>
</dbReference>
<dbReference type="Bgee" id="ENSG00000174990">
    <property type="expression patterns" value="Expressed in right lobe of liver and 67 other cell types or tissues"/>
</dbReference>
<dbReference type="ExpressionAtlas" id="P35218">
    <property type="expression patterns" value="baseline and differential"/>
</dbReference>
<dbReference type="GO" id="GO:0005737">
    <property type="term" value="C:cytoplasm"/>
    <property type="evidence" value="ECO:0000318"/>
    <property type="project" value="GO_Central"/>
</dbReference>
<dbReference type="GO" id="GO:0005759">
    <property type="term" value="C:mitochondrial matrix"/>
    <property type="evidence" value="ECO:0000304"/>
    <property type="project" value="Reactome"/>
</dbReference>
<dbReference type="GO" id="GO:0005739">
    <property type="term" value="C:mitochondrion"/>
    <property type="evidence" value="ECO:0000314"/>
    <property type="project" value="UniProtKB"/>
</dbReference>
<dbReference type="GO" id="GO:0004089">
    <property type="term" value="F:carbonate dehydratase activity"/>
    <property type="evidence" value="ECO:0000314"/>
    <property type="project" value="UniProtKB"/>
</dbReference>
<dbReference type="GO" id="GO:0008270">
    <property type="term" value="F:zinc ion binding"/>
    <property type="evidence" value="ECO:0007669"/>
    <property type="project" value="InterPro"/>
</dbReference>
<dbReference type="CDD" id="cd03118">
    <property type="entry name" value="alpha_CA_V"/>
    <property type="match status" value="1"/>
</dbReference>
<dbReference type="FunFam" id="3.10.200.10:FF:000001">
    <property type="entry name" value="Carbonic anhydrase 2"/>
    <property type="match status" value="1"/>
</dbReference>
<dbReference type="Gene3D" id="3.10.200.10">
    <property type="entry name" value="Alpha carbonic anhydrase"/>
    <property type="match status" value="1"/>
</dbReference>
<dbReference type="InterPro" id="IPR001148">
    <property type="entry name" value="CA_dom"/>
</dbReference>
<dbReference type="InterPro" id="IPR036398">
    <property type="entry name" value="CA_dom_sf"/>
</dbReference>
<dbReference type="InterPro" id="IPR023561">
    <property type="entry name" value="Carbonic_anhydrase_a-class"/>
</dbReference>
<dbReference type="InterPro" id="IPR018338">
    <property type="entry name" value="Carbonic_anhydrase_a-class_CS"/>
</dbReference>
<dbReference type="PANTHER" id="PTHR18952">
    <property type="entry name" value="CARBONIC ANHYDRASE"/>
    <property type="match status" value="1"/>
</dbReference>
<dbReference type="PANTHER" id="PTHR18952:SF89">
    <property type="entry name" value="CARBONIC ANHYDRASE 5A, MITOCHONDRIAL"/>
    <property type="match status" value="1"/>
</dbReference>
<dbReference type="Pfam" id="PF00194">
    <property type="entry name" value="Carb_anhydrase"/>
    <property type="match status" value="1"/>
</dbReference>
<dbReference type="SMART" id="SM01057">
    <property type="entry name" value="Carb_anhydrase"/>
    <property type="match status" value="1"/>
</dbReference>
<dbReference type="SUPFAM" id="SSF51069">
    <property type="entry name" value="Carbonic anhydrase"/>
    <property type="match status" value="1"/>
</dbReference>
<dbReference type="PROSITE" id="PS00162">
    <property type="entry name" value="ALPHA_CA_1"/>
    <property type="match status" value="1"/>
</dbReference>
<dbReference type="PROSITE" id="PS51144">
    <property type="entry name" value="ALPHA_CA_2"/>
    <property type="match status" value="1"/>
</dbReference>
<evidence type="ECO:0000250" key="1">
    <source>
        <dbReference type="UniProtKB" id="P23589"/>
    </source>
</evidence>
<evidence type="ECO:0000255" key="2">
    <source>
        <dbReference type="PROSITE-ProRule" id="PRU01134"/>
    </source>
</evidence>
<evidence type="ECO:0000269" key="3">
    <source>
    </source>
</evidence>
<evidence type="ECO:0000269" key="4">
    <source>
    </source>
</evidence>
<evidence type="ECO:0000269" key="5">
    <source>
    </source>
</evidence>
<evidence type="ECO:0000269" key="6">
    <source>
    </source>
</evidence>
<evidence type="ECO:0000269" key="7">
    <source>
    </source>
</evidence>
<evidence type="ECO:0000269" key="8">
    <source>
    </source>
</evidence>
<evidence type="ECO:0000269" key="9">
    <source>
    </source>
</evidence>
<evidence type="ECO:0000269" key="10">
    <source>
    </source>
</evidence>
<evidence type="ECO:0000269" key="11">
    <source>
    </source>
</evidence>
<evidence type="ECO:0000305" key="12"/>
<evidence type="ECO:0000305" key="13">
    <source>
    </source>
</evidence>
<evidence type="ECO:0000305" key="14">
    <source>
    </source>
</evidence>
<evidence type="ECO:0000312" key="15">
    <source>
        <dbReference type="HGNC" id="HGNC:1377"/>
    </source>
</evidence>
<comment type="function">
    <text evidence="10 11">Mitochondrial carbonic anhydrase that catalyzes the reversible conversion of carbon dioxide to bicarbonate/HCO3 (PubMed:24530203, PubMed:8356065). Mitochondria are impermeable to HCO3, and thus this intramitochondrial carbonic anhydrase is pivotal in providing HCO3 for multiple mitochondrial enzymes that catalyze the formation of essential metabolites of intermediary metabolism in the urea and Krebs cycles (PubMed:24530203).</text>
</comment>
<comment type="catalytic activity">
    <reaction evidence="3 4 5 6 7 8 9 10 11">
        <text>hydrogencarbonate + H(+) = CO2 + H2O</text>
        <dbReference type="Rhea" id="RHEA:10748"/>
        <dbReference type="ChEBI" id="CHEBI:15377"/>
        <dbReference type="ChEBI" id="CHEBI:15378"/>
        <dbReference type="ChEBI" id="CHEBI:16526"/>
        <dbReference type="ChEBI" id="CHEBI:17544"/>
        <dbReference type="EC" id="4.2.1.1"/>
    </reaction>
    <physiologicalReaction direction="left-to-right" evidence="13">
        <dbReference type="Rhea" id="RHEA:10749"/>
    </physiologicalReaction>
    <physiologicalReaction direction="right-to-left" evidence="10">
        <dbReference type="Rhea" id="RHEA:10750"/>
    </physiologicalReaction>
</comment>
<comment type="cofactor">
    <cofactor evidence="1">
        <name>Zn(2+)</name>
        <dbReference type="ChEBI" id="CHEBI:29105"/>
    </cofactor>
</comment>
<comment type="activity regulation">
    <text evidence="3 4 5 6 7 8 9">Activated by L- and D-histidine (PubMed:16807956). Activated by L- and D-phenylalanine (PubMed:16686544). Activated by L-adrenaline (PubMed:17127057). Inhibited by coumarins, sulfonamide derivatives such as acetazolamide and Foscarnet (phosphonoformate trisodium salt) (PubMed:17314045, PubMed:18618712, PubMed:19186056, PubMed:19206230). Activated by histamine (PubMed:17127057).</text>
</comment>
<comment type="biophysicochemical properties">
    <kinetics>
        <KM evidence="7">10 mM for CO2</KM>
    </kinetics>
</comment>
<comment type="subcellular location">
    <subcellularLocation>
        <location evidence="11">Mitochondrion</location>
    </subcellularLocation>
</comment>
<comment type="disease" evidence="10">
    <disease id="DI-04105">
        <name>Hyperammonemia due to carbonic anhydrase VA deficiency</name>
        <acronym>CA5AD</acronym>
        <description>An autosomal recessive inborn error of metabolism, clinically characterized by infantile hyperammonemic encephalopathy. Metabolic abnormalities include hypoglycemia, hyperlactatemia, metabolic acidosis and respiratory alkalosis.</description>
        <dbReference type="MIM" id="615751"/>
    </disease>
    <text>The disease is caused by variants affecting the gene represented in this entry.</text>
</comment>
<comment type="similarity">
    <text evidence="12">Belongs to the alpha-carbonic anhydrase family.</text>
</comment>
<name>CAH5A_HUMAN</name>
<feature type="transit peptide" description="Mitochondrion" evidence="11">
    <location>
        <begin position="1"/>
        <end position="38"/>
    </location>
</feature>
<feature type="chain" id="PRO_0000004234" description="Carbonic anhydrase 5A, mitochondrial">
    <location>
        <begin position="39"/>
        <end position="305"/>
    </location>
</feature>
<feature type="domain" description="Alpha-carbonic anhydrase" evidence="2">
    <location>
        <begin position="39"/>
        <end position="296"/>
    </location>
</feature>
<feature type="binding site" evidence="1">
    <location>
        <position position="130"/>
    </location>
    <ligand>
        <name>Zn(2+)</name>
        <dbReference type="ChEBI" id="CHEBI:29105"/>
        <note>catalytic</note>
    </ligand>
</feature>
<feature type="binding site" evidence="1">
    <location>
        <position position="132"/>
    </location>
    <ligand>
        <name>Zn(2+)</name>
        <dbReference type="ChEBI" id="CHEBI:29105"/>
        <note>catalytic</note>
    </ligand>
</feature>
<feature type="binding site" evidence="1">
    <location>
        <position position="155"/>
    </location>
    <ligand>
        <name>Zn(2+)</name>
        <dbReference type="ChEBI" id="CHEBI:29105"/>
        <note>catalytic</note>
    </ligand>
</feature>
<feature type="sequence variant" id="VAR_071188" description="In CA5AD; decreased carbonate dehydratase activity; decreased protein thermal stability; dbSNP:rs587777316." evidence="10">
    <original>S</original>
    <variation>P</variation>
    <location>
        <position position="233"/>
    </location>
</feature>
<reference key="1">
    <citation type="journal article" date="1993" name="Proc. Natl. Acad. Sci. U.S.A.">
        <title>Human mitochondrial carbonic anhydrase: cDNA cloning, expression, subcellular localization, and mapping to chromosome 16.</title>
        <authorList>
            <person name="Nagao Y."/>
            <person name="Platero J.S."/>
            <person name="Waheed A."/>
            <person name="Sly W.S."/>
        </authorList>
    </citation>
    <scope>NUCLEOTIDE SEQUENCE [MRNA]</scope>
    <scope>PARTIAL PROTEIN SEQUENCE</scope>
    <scope>FUNCTION</scope>
    <scope>CATALYTIC ACTIVITY</scope>
    <scope>SUBCELLULAR LOCATION</scope>
    <scope>TRANSIT PEPTIDE</scope>
    <source>
        <tissue>Liver</tissue>
    </source>
</reference>
<reference key="2">
    <citation type="journal article" date="1995" name="Genomics">
        <title>Genomic organization of the human gene (CA5) and pseudogene for mitochondrial carbonic anhydrase V and their localization to chromosomes 16q and 16p.</title>
        <authorList>
            <person name="Nagao Y."/>
            <person name="Batanian J.R."/>
            <person name="Clemente M.F."/>
            <person name="Sly W.S."/>
        </authorList>
    </citation>
    <scope>NUCLEOTIDE SEQUENCE [GENOMIC DNA]</scope>
    <source>
        <tissue>Umbilical cord</tissue>
    </source>
</reference>
<reference key="3">
    <citation type="submission" date="2005-09" db="EMBL/GenBank/DDBJ databases">
        <authorList>
            <person name="Mural R.J."/>
            <person name="Istrail S."/>
            <person name="Sutton G.G."/>
            <person name="Florea L."/>
            <person name="Halpern A.L."/>
            <person name="Mobarry C.M."/>
            <person name="Lippert R."/>
            <person name="Walenz B."/>
            <person name="Shatkay H."/>
            <person name="Dew I."/>
            <person name="Miller J.R."/>
            <person name="Flanigan M.J."/>
            <person name="Edwards N.J."/>
            <person name="Bolanos R."/>
            <person name="Fasulo D."/>
            <person name="Halldorsson B.V."/>
            <person name="Hannenhalli S."/>
            <person name="Turner R."/>
            <person name="Yooseph S."/>
            <person name="Lu F."/>
            <person name="Nusskern D.R."/>
            <person name="Shue B.C."/>
            <person name="Zheng X.H."/>
            <person name="Zhong F."/>
            <person name="Delcher A.L."/>
            <person name="Huson D.H."/>
            <person name="Kravitz S.A."/>
            <person name="Mouchard L."/>
            <person name="Reinert K."/>
            <person name="Remington K.A."/>
            <person name="Clark A.G."/>
            <person name="Waterman M.S."/>
            <person name="Eichler E.E."/>
            <person name="Adams M.D."/>
            <person name="Hunkapiller M.W."/>
            <person name="Myers E.W."/>
            <person name="Venter J.C."/>
        </authorList>
    </citation>
    <scope>NUCLEOTIDE SEQUENCE [LARGE SCALE GENOMIC DNA]</scope>
</reference>
<reference key="4">
    <citation type="journal article" date="2004" name="Genome Res.">
        <title>The status, quality, and expansion of the NIH full-length cDNA project: the Mammalian Gene Collection (MGC).</title>
        <authorList>
            <consortium name="The MGC Project Team"/>
        </authorList>
    </citation>
    <scope>NUCLEOTIDE SEQUENCE [LARGE SCALE MRNA]</scope>
</reference>
<reference key="5">
    <citation type="journal article" date="2006" name="Chemistry">
        <title>Carbonic anhydrase activators. Activation of isozymes I, II, IV, VA, VII, and XIV with l- and d-histidine and crystallographic analysis of their adducts with isoform II: engineering proton-transfer processes within the active site of an enzyme.</title>
        <authorList>
            <person name="Temperini C."/>
            <person name="Scozzafava A."/>
            <person name="Vullo D."/>
            <person name="Supuran C.T."/>
        </authorList>
    </citation>
    <scope>CATALYTIC ACTIVITY</scope>
    <scope>ACTIVITY REGULATION</scope>
</reference>
<reference key="6">
    <citation type="journal article" date="2006" name="J. Med. Chem.">
        <title>Carbonic anhydrase activators. Activation of isoforms I, II, IV, VA, VII, and XIV with L- and D-phenylalanine and crystallographic analysis of their adducts with isozyme II: stereospecific recognition within the active site of an enzyme and its consequences for the drug design.</title>
        <authorList>
            <person name="Temperini C."/>
            <person name="Scozzafava A."/>
            <person name="Vullo D."/>
            <person name="Supuran C.T."/>
        </authorList>
    </citation>
    <scope>CATALYTIC ACTIVITY</scope>
    <scope>ACTIVITY REGULATION</scope>
</reference>
<reference key="7">
    <citation type="journal article" date="2007" name="Bioorg. Med. Chem. Lett.">
        <title>Carbonic anhydrase activators: L-Adrenaline plugs the active site entrance of isozyme II, activating better isoforms I, IV, VA, VII, and XIV.</title>
        <authorList>
            <person name="Temperini C."/>
            <person name="Innocenti A."/>
            <person name="Scozzafava A."/>
            <person name="Mastrolorenzo A."/>
            <person name="Supuran C.T."/>
        </authorList>
    </citation>
    <scope>CATALYTIC ACTIVITY</scope>
    <scope>ACTIVITY REGULATION</scope>
</reference>
<reference key="8">
    <citation type="journal article" date="2007" name="Bioorg. Med. Chem. Lett.">
        <title>Phosph(on)ate as a zinc-binding group in metalloenzyme inhibitors: X-ray crystal structure of the antiviral drug foscarnet complexed to human carbonic anhydrase I.</title>
        <authorList>
            <person name="Temperini C."/>
            <person name="Innocenti A."/>
            <person name="Guerri A."/>
            <person name="Scozzafava A."/>
            <person name="Rusconi S."/>
            <person name="Supuran C.T."/>
        </authorList>
    </citation>
    <scope>CATALYTIC ACTIVITY</scope>
    <scope>ACTIVITY REGULATION</scope>
</reference>
<reference key="9">
    <citation type="journal article" date="2009" name="Bioorg. Med. Chem. Lett.">
        <title>A thiabendazole sulfonamide shows potent inhibitory activity against mammalian and nematode alpha-carbonic anhydrases.</title>
        <authorList>
            <person name="Crocetti L."/>
            <person name="Maresca A."/>
            <person name="Temperini C."/>
            <person name="Hall R.A."/>
            <person name="Scozzafava A."/>
            <person name="Muehlschlegel F.A."/>
            <person name="Supuran C.T."/>
        </authorList>
    </citation>
    <scope>CATALYTIC ACTIVITY</scope>
    <scope>ACTIVITY REGULATION</scope>
</reference>
<reference key="10">
    <citation type="journal article" date="2009" name="J. Am. Chem. Soc.">
        <title>Non-zinc mediated inhibition of carbonic anhydrases: coumarins are a new class of suicide inhibitors.</title>
        <authorList>
            <person name="Maresca A."/>
            <person name="Temperini C."/>
            <person name="Vu H."/>
            <person name="Pham N.B."/>
            <person name="Poulsen S.-A."/>
            <person name="Scozzafava A."/>
            <person name="Quinn R.J."/>
            <person name="Supuran C.T."/>
        </authorList>
    </citation>
    <scope>CATALYTIC ACTIVITY</scope>
    <scope>ACTIVITY REGULATION</scope>
</reference>
<reference key="11">
    <citation type="journal article" date="2009" name="Proteins">
        <title>Crystal structure of human carbonic anhydrase XIII and its complex with the inhibitor acetazolamide.</title>
        <authorList>
            <person name="Di Fiore A."/>
            <person name="Monti S.M."/>
            <person name="Hilvo M."/>
            <person name="Parkkila S."/>
            <person name="Romano V."/>
            <person name="Scaloni A."/>
            <person name="Pedone C."/>
            <person name="Scozzafava A."/>
            <person name="Supuran C.T."/>
            <person name="De Simone G."/>
        </authorList>
    </citation>
    <scope>CATALYTIC ACTIVITY</scope>
    <scope>BIOPHYSICOCHEMICAL PROPERTIES</scope>
    <scope>ACTIVITY REGULATION</scope>
</reference>
<reference key="12">
    <citation type="journal article" date="2014" name="J. Proteomics">
        <title>An enzyme assisted RP-RPLC approach for in-depth analysis of human liver phosphoproteome.</title>
        <authorList>
            <person name="Bian Y."/>
            <person name="Song C."/>
            <person name="Cheng K."/>
            <person name="Dong M."/>
            <person name="Wang F."/>
            <person name="Huang J."/>
            <person name="Sun D."/>
            <person name="Wang L."/>
            <person name="Ye M."/>
            <person name="Zou H."/>
        </authorList>
    </citation>
    <scope>IDENTIFICATION BY MASS SPECTROMETRY [LARGE SCALE ANALYSIS]</scope>
    <source>
        <tissue>Liver</tissue>
    </source>
</reference>
<reference key="13">
    <citation type="journal article" date="2014" name="Am. J. Hum. Genet.">
        <title>Mitochondrial carbonic anhydrase VA deficiency resulting from CA5A alterations presents with hyperammonemia in early childhood.</title>
        <authorList>
            <person name="van Karnebeek C.D."/>
            <person name="Sly W.S."/>
            <person name="Ross C.J."/>
            <person name="Salvarinova R."/>
            <person name="Yaplito-Lee J."/>
            <person name="Santra S."/>
            <person name="Shyr C."/>
            <person name="Horvath G.A."/>
            <person name="Eydoux P."/>
            <person name="Lehman A.M."/>
            <person name="Bernard V."/>
            <person name="Newlove T."/>
            <person name="Ukpeh H."/>
            <person name="Chakrapani A."/>
            <person name="Preece M.A."/>
            <person name="Ball S."/>
            <person name="Pitt J."/>
            <person name="Vallance H.D."/>
            <person name="Coulter-Mackie M."/>
            <person name="Nguyen H."/>
            <person name="Zhang L.H."/>
            <person name="Bhavsar A.P."/>
            <person name="Sinclair G."/>
            <person name="Waheed A."/>
            <person name="Wasserman W.W."/>
            <person name="Stockler-Ipsiroglu S."/>
        </authorList>
    </citation>
    <scope>VARIANT CA5AD PRO-233</scope>
    <scope>CHARACTERIZATION OF VARIANT CA5AD PRO-233</scope>
    <scope>FUNCTION</scope>
    <scope>CATALYTIC ACTIVITY</scope>
</reference>
<proteinExistence type="evidence at protein level"/>